<proteinExistence type="inferred from homology"/>
<dbReference type="EC" id="2.4.2.8" evidence="3"/>
<dbReference type="EMBL" id="AE009948">
    <property type="protein sequence ID" value="AAM98923.1"/>
    <property type="molecule type" value="Genomic_DNA"/>
</dbReference>
<dbReference type="RefSeq" id="NP_687051.1">
    <property type="nucleotide sequence ID" value="NC_004116.1"/>
</dbReference>
<dbReference type="RefSeq" id="WP_000892188.1">
    <property type="nucleotide sequence ID" value="NC_004116.1"/>
</dbReference>
<dbReference type="SMR" id="Q8E2H3"/>
<dbReference type="STRING" id="208435.SAG0015"/>
<dbReference type="GeneID" id="66884927"/>
<dbReference type="KEGG" id="sag:SAG0015"/>
<dbReference type="PATRIC" id="fig|208435.3.peg.14"/>
<dbReference type="HOGENOM" id="CLU_073615_0_0_9"/>
<dbReference type="OrthoDB" id="9802824at2"/>
<dbReference type="UniPathway" id="UPA00591">
    <property type="reaction ID" value="UER00648"/>
</dbReference>
<dbReference type="UniPathway" id="UPA00909">
    <property type="reaction ID" value="UER00887"/>
</dbReference>
<dbReference type="Proteomes" id="UP000000821">
    <property type="component" value="Chromosome"/>
</dbReference>
<dbReference type="GO" id="GO:0005829">
    <property type="term" value="C:cytosol"/>
    <property type="evidence" value="ECO:0007669"/>
    <property type="project" value="TreeGrafter"/>
</dbReference>
<dbReference type="GO" id="GO:0052657">
    <property type="term" value="F:guanine phosphoribosyltransferase activity"/>
    <property type="evidence" value="ECO:0007669"/>
    <property type="project" value="RHEA"/>
</dbReference>
<dbReference type="GO" id="GO:0004422">
    <property type="term" value="F:hypoxanthine phosphoribosyltransferase activity"/>
    <property type="evidence" value="ECO:0007669"/>
    <property type="project" value="InterPro"/>
</dbReference>
<dbReference type="GO" id="GO:0000287">
    <property type="term" value="F:magnesium ion binding"/>
    <property type="evidence" value="ECO:0007669"/>
    <property type="project" value="TreeGrafter"/>
</dbReference>
<dbReference type="GO" id="GO:0000166">
    <property type="term" value="F:nucleotide binding"/>
    <property type="evidence" value="ECO:0007669"/>
    <property type="project" value="UniProtKB-KW"/>
</dbReference>
<dbReference type="GO" id="GO:0032263">
    <property type="term" value="P:GMP salvage"/>
    <property type="evidence" value="ECO:0007669"/>
    <property type="project" value="UniProtKB-UniPathway"/>
</dbReference>
<dbReference type="GO" id="GO:0006178">
    <property type="term" value="P:guanine salvage"/>
    <property type="evidence" value="ECO:0007669"/>
    <property type="project" value="TreeGrafter"/>
</dbReference>
<dbReference type="GO" id="GO:0046100">
    <property type="term" value="P:hypoxanthine metabolic process"/>
    <property type="evidence" value="ECO:0007669"/>
    <property type="project" value="TreeGrafter"/>
</dbReference>
<dbReference type="GO" id="GO:0032264">
    <property type="term" value="P:IMP salvage"/>
    <property type="evidence" value="ECO:0007669"/>
    <property type="project" value="UniProtKB-UniPathway"/>
</dbReference>
<dbReference type="GO" id="GO:0006166">
    <property type="term" value="P:purine ribonucleoside salvage"/>
    <property type="evidence" value="ECO:0007669"/>
    <property type="project" value="UniProtKB-KW"/>
</dbReference>
<dbReference type="CDD" id="cd06223">
    <property type="entry name" value="PRTases_typeI"/>
    <property type="match status" value="1"/>
</dbReference>
<dbReference type="FunFam" id="3.40.50.2020:FF:000006">
    <property type="entry name" value="Hypoxanthine phosphoribosyltransferase"/>
    <property type="match status" value="1"/>
</dbReference>
<dbReference type="Gene3D" id="3.40.50.2020">
    <property type="match status" value="1"/>
</dbReference>
<dbReference type="InterPro" id="IPR050408">
    <property type="entry name" value="HGPRT"/>
</dbReference>
<dbReference type="InterPro" id="IPR005904">
    <property type="entry name" value="Hxn_phspho_trans"/>
</dbReference>
<dbReference type="InterPro" id="IPR000836">
    <property type="entry name" value="PRibTrfase_dom"/>
</dbReference>
<dbReference type="InterPro" id="IPR029057">
    <property type="entry name" value="PRTase-like"/>
</dbReference>
<dbReference type="NCBIfam" id="TIGR01203">
    <property type="entry name" value="HGPRTase"/>
    <property type="match status" value="1"/>
</dbReference>
<dbReference type="PANTHER" id="PTHR43340:SF1">
    <property type="entry name" value="HYPOXANTHINE PHOSPHORIBOSYLTRANSFERASE"/>
    <property type="match status" value="1"/>
</dbReference>
<dbReference type="PANTHER" id="PTHR43340">
    <property type="entry name" value="HYPOXANTHINE-GUANINE PHOSPHORIBOSYLTRANSFERASE"/>
    <property type="match status" value="1"/>
</dbReference>
<dbReference type="Pfam" id="PF00156">
    <property type="entry name" value="Pribosyltran"/>
    <property type="match status" value="1"/>
</dbReference>
<dbReference type="SUPFAM" id="SSF53271">
    <property type="entry name" value="PRTase-like"/>
    <property type="match status" value="1"/>
</dbReference>
<sequence length="180" mass="20383">MLENDIKKVLYSEEDIILKTKELGAKLTADYAGKNPLLVGVLKGSVPFMAELLKHIDTHVEIDFMVVSSYHGGTTSSGEVKILKDVDTNIEGRDVIFIEDIIDTGRTLKYLRDMFKYRQANSVKVATLFDKPEGRLVDIDADYVCYDIPNEFIVGFGLDYAENYRNLPYVGVLKEEIYSK</sequence>
<accession>Q8E2H3</accession>
<reference key="1">
    <citation type="journal article" date="2002" name="Proc. Natl. Acad. Sci. U.S.A.">
        <title>Complete genome sequence and comparative genomic analysis of an emerging human pathogen, serotype V Streptococcus agalactiae.</title>
        <authorList>
            <person name="Tettelin H."/>
            <person name="Masignani V."/>
            <person name="Cieslewicz M.J."/>
            <person name="Eisen J.A."/>
            <person name="Peterson S.N."/>
            <person name="Wessels M.R."/>
            <person name="Paulsen I.T."/>
            <person name="Nelson K.E."/>
            <person name="Margarit I."/>
            <person name="Read T.D."/>
            <person name="Madoff L.C."/>
            <person name="Wolf A.M."/>
            <person name="Beanan M.J."/>
            <person name="Brinkac L.M."/>
            <person name="Daugherty S.C."/>
            <person name="DeBoy R.T."/>
            <person name="Durkin A.S."/>
            <person name="Kolonay J.F."/>
            <person name="Madupu R."/>
            <person name="Lewis M.R."/>
            <person name="Radune D."/>
            <person name="Fedorova N.B."/>
            <person name="Scanlan D."/>
            <person name="Khouri H.M."/>
            <person name="Mulligan S."/>
            <person name="Carty H.A."/>
            <person name="Cline R.T."/>
            <person name="Van Aken S.E."/>
            <person name="Gill J."/>
            <person name="Scarselli M."/>
            <person name="Mora M."/>
            <person name="Iacobini E.T."/>
            <person name="Brettoni C."/>
            <person name="Galli G."/>
            <person name="Mariani M."/>
            <person name="Vegni F."/>
            <person name="Maione D."/>
            <person name="Rinaudo D."/>
            <person name="Rappuoli R."/>
            <person name="Telford J.L."/>
            <person name="Kasper D.L."/>
            <person name="Grandi G."/>
            <person name="Fraser C.M."/>
        </authorList>
    </citation>
    <scope>NUCLEOTIDE SEQUENCE [LARGE SCALE GENOMIC DNA]</scope>
    <source>
        <strain>ATCC BAA-611 / 2603 V/R</strain>
    </source>
</reference>
<comment type="function">
    <text evidence="3">Purine salvage pathway enzyme that catalyzes the transfer of the ribosyl-5-phosphate group from 5-phospho-alpha-D-ribose 1-diphosphate (PRPP) to the N9 position of the 6-oxopurines hypoxanthine and guanine to form the corresponding ribonucleotides IMP (inosine 5'-monophosphate) and GMP (guanosine 5'-monophosphate), with the release of PPi.</text>
</comment>
<comment type="catalytic activity">
    <reaction evidence="3">
        <text>IMP + diphosphate = hypoxanthine + 5-phospho-alpha-D-ribose 1-diphosphate</text>
        <dbReference type="Rhea" id="RHEA:17973"/>
        <dbReference type="ChEBI" id="CHEBI:17368"/>
        <dbReference type="ChEBI" id="CHEBI:33019"/>
        <dbReference type="ChEBI" id="CHEBI:58017"/>
        <dbReference type="ChEBI" id="CHEBI:58053"/>
        <dbReference type="EC" id="2.4.2.8"/>
    </reaction>
    <physiologicalReaction direction="right-to-left" evidence="3">
        <dbReference type="Rhea" id="RHEA:17975"/>
    </physiologicalReaction>
</comment>
<comment type="catalytic activity">
    <reaction evidence="3">
        <text>GMP + diphosphate = guanine + 5-phospho-alpha-D-ribose 1-diphosphate</text>
        <dbReference type="Rhea" id="RHEA:25424"/>
        <dbReference type="ChEBI" id="CHEBI:16235"/>
        <dbReference type="ChEBI" id="CHEBI:33019"/>
        <dbReference type="ChEBI" id="CHEBI:58017"/>
        <dbReference type="ChEBI" id="CHEBI:58115"/>
        <dbReference type="EC" id="2.4.2.8"/>
    </reaction>
    <physiologicalReaction direction="right-to-left" evidence="3">
        <dbReference type="Rhea" id="RHEA:25426"/>
    </physiologicalReaction>
</comment>
<comment type="cofactor">
    <cofactor evidence="3">
        <name>Mg(2+)</name>
        <dbReference type="ChEBI" id="CHEBI:18420"/>
    </cofactor>
</comment>
<comment type="pathway">
    <text evidence="3">Purine metabolism; IMP biosynthesis via salvage pathway; IMP from hypoxanthine: step 1/1.</text>
</comment>
<comment type="pathway">
    <text evidence="3">Purine metabolism; GMP biosynthesis via salvage pathway; GMP from guanine: step 1/1.</text>
</comment>
<comment type="subcellular location">
    <subcellularLocation>
        <location evidence="1">Cytoplasm</location>
    </subcellularLocation>
</comment>
<comment type="similarity">
    <text evidence="4">Belongs to the purine/pyrimidine phosphoribosyltransferase family.</text>
</comment>
<protein>
    <recommendedName>
        <fullName>Hypoxanthine-guanine phosphoribosyltransferase</fullName>
        <shortName>HGPRT</shortName>
        <shortName>HGPRTase</shortName>
        <ecNumber evidence="3">2.4.2.8</ecNumber>
    </recommendedName>
</protein>
<keyword id="KW-0963">Cytoplasm</keyword>
<keyword id="KW-0328">Glycosyltransferase</keyword>
<keyword id="KW-0460">Magnesium</keyword>
<keyword id="KW-0479">Metal-binding</keyword>
<keyword id="KW-0547">Nucleotide-binding</keyword>
<keyword id="KW-0660">Purine salvage</keyword>
<keyword id="KW-1185">Reference proteome</keyword>
<keyword id="KW-0808">Transferase</keyword>
<organism>
    <name type="scientific">Streptococcus agalactiae serotype V (strain ATCC BAA-611 / 2603 V/R)</name>
    <dbReference type="NCBI Taxonomy" id="208435"/>
    <lineage>
        <taxon>Bacteria</taxon>
        <taxon>Bacillati</taxon>
        <taxon>Bacillota</taxon>
        <taxon>Bacilli</taxon>
        <taxon>Lactobacillales</taxon>
        <taxon>Streptococcaceae</taxon>
        <taxon>Streptococcus</taxon>
    </lineage>
</organism>
<feature type="chain" id="PRO_0000139621" description="Hypoxanthine-guanine phosphoribosyltransferase">
    <location>
        <begin position="1"/>
        <end position="180"/>
    </location>
</feature>
<feature type="active site" description="Proton acceptor" evidence="2">
    <location>
        <position position="103"/>
    </location>
</feature>
<feature type="binding site" evidence="3">
    <location>
        <position position="43"/>
    </location>
    <ligand>
        <name>diphosphate</name>
        <dbReference type="ChEBI" id="CHEBI:33019"/>
    </ligand>
</feature>
<feature type="binding site" evidence="3">
    <location>
        <position position="44"/>
    </location>
    <ligand>
        <name>diphosphate</name>
        <dbReference type="ChEBI" id="CHEBI:33019"/>
    </ligand>
</feature>
<feature type="binding site" evidence="3">
    <location>
        <position position="99"/>
    </location>
    <ligand>
        <name>Mg(2+)</name>
        <dbReference type="ChEBI" id="CHEBI:18420"/>
    </ligand>
</feature>
<feature type="binding site" evidence="3">
    <location>
        <position position="100"/>
    </location>
    <ligand>
        <name>Mg(2+)</name>
        <dbReference type="ChEBI" id="CHEBI:18420"/>
    </ligand>
</feature>
<feature type="binding site" evidence="3">
    <location>
        <position position="131"/>
    </location>
    <ligand>
        <name>GMP</name>
        <dbReference type="ChEBI" id="CHEBI:58115"/>
    </ligand>
</feature>
<feature type="binding site" evidence="3">
    <location>
        <begin position="152"/>
        <end position="153"/>
    </location>
    <ligand>
        <name>GMP</name>
        <dbReference type="ChEBI" id="CHEBI:58115"/>
    </ligand>
</feature>
<feature type="binding site" evidence="3">
    <location>
        <position position="159"/>
    </location>
    <ligand>
        <name>GMP</name>
        <dbReference type="ChEBI" id="CHEBI:58115"/>
    </ligand>
</feature>
<feature type="binding site" evidence="3">
    <location>
        <position position="165"/>
    </location>
    <ligand>
        <name>diphosphate</name>
        <dbReference type="ChEBI" id="CHEBI:33019"/>
    </ligand>
</feature>
<evidence type="ECO:0000250" key="1"/>
<evidence type="ECO:0000250" key="2">
    <source>
        <dbReference type="UniProtKB" id="P0A9M2"/>
    </source>
</evidence>
<evidence type="ECO:0000250" key="3">
    <source>
        <dbReference type="UniProtKB" id="P9WHQ9"/>
    </source>
</evidence>
<evidence type="ECO:0000305" key="4"/>
<name>HGPRT_STRA5</name>
<gene>
    <name type="primary">hpt</name>
    <name type="ordered locus">SAG0015</name>
</gene>